<organism>
    <name type="scientific">Rhizobium meliloti (strain 1021)</name>
    <name type="common">Ensifer meliloti</name>
    <name type="synonym">Sinorhizobium meliloti</name>
    <dbReference type="NCBI Taxonomy" id="266834"/>
    <lineage>
        <taxon>Bacteria</taxon>
        <taxon>Pseudomonadati</taxon>
        <taxon>Pseudomonadota</taxon>
        <taxon>Alphaproteobacteria</taxon>
        <taxon>Hyphomicrobiales</taxon>
        <taxon>Rhizobiaceae</taxon>
        <taxon>Sinorhizobium/Ensifer group</taxon>
        <taxon>Sinorhizobium</taxon>
    </lineage>
</organism>
<keyword id="KW-0113">Calvin cycle</keyword>
<keyword id="KW-0120">Carbon dioxide fixation</keyword>
<keyword id="KW-0614">Plasmid</keyword>
<keyword id="KW-1185">Reference proteome</keyword>
<evidence type="ECO:0000255" key="1">
    <source>
        <dbReference type="HAMAP-Rule" id="MF_00859"/>
    </source>
</evidence>
<evidence type="ECO:0000256" key="2">
    <source>
        <dbReference type="SAM" id="MobiDB-lite"/>
    </source>
</evidence>
<reference key="1">
    <citation type="journal article" date="2001" name="Proc. Natl. Acad. Sci. U.S.A.">
        <title>The complete sequence of the 1,683-kb pSymB megaplasmid from the N2-fixing endosymbiont Sinorhizobium meliloti.</title>
        <authorList>
            <person name="Finan T.M."/>
            <person name="Weidner S."/>
            <person name="Wong K."/>
            <person name="Buhrmester J."/>
            <person name="Chain P."/>
            <person name="Vorhoelter F.J."/>
            <person name="Hernandez-Lucas I."/>
            <person name="Becker A."/>
            <person name="Cowie A."/>
            <person name="Gouzy J."/>
            <person name="Golding B."/>
            <person name="Puehler A."/>
        </authorList>
    </citation>
    <scope>NUCLEOTIDE SEQUENCE [LARGE SCALE GENOMIC DNA]</scope>
    <source>
        <strain>1021</strain>
    </source>
</reference>
<reference key="2">
    <citation type="journal article" date="2001" name="Science">
        <title>The composite genome of the legume symbiont Sinorhizobium meliloti.</title>
        <authorList>
            <person name="Galibert F."/>
            <person name="Finan T.M."/>
            <person name="Long S.R."/>
            <person name="Puehler A."/>
            <person name="Abola P."/>
            <person name="Ampe F."/>
            <person name="Barloy-Hubler F."/>
            <person name="Barnett M.J."/>
            <person name="Becker A."/>
            <person name="Boistard P."/>
            <person name="Bothe G."/>
            <person name="Boutry M."/>
            <person name="Bowser L."/>
            <person name="Buhrmester J."/>
            <person name="Cadieu E."/>
            <person name="Capela D."/>
            <person name="Chain P."/>
            <person name="Cowie A."/>
            <person name="Davis R.W."/>
            <person name="Dreano S."/>
            <person name="Federspiel N.A."/>
            <person name="Fisher R.F."/>
            <person name="Gloux S."/>
            <person name="Godrie T."/>
            <person name="Goffeau A."/>
            <person name="Golding B."/>
            <person name="Gouzy J."/>
            <person name="Gurjal M."/>
            <person name="Hernandez-Lucas I."/>
            <person name="Hong A."/>
            <person name="Huizar L."/>
            <person name="Hyman R.W."/>
            <person name="Jones T."/>
            <person name="Kahn D."/>
            <person name="Kahn M.L."/>
            <person name="Kalman S."/>
            <person name="Keating D.H."/>
            <person name="Kiss E."/>
            <person name="Komp C."/>
            <person name="Lelaure V."/>
            <person name="Masuy D."/>
            <person name="Palm C."/>
            <person name="Peck M.C."/>
            <person name="Pohl T.M."/>
            <person name="Portetelle D."/>
            <person name="Purnelle B."/>
            <person name="Ramsperger U."/>
            <person name="Surzycki R."/>
            <person name="Thebault P."/>
            <person name="Vandenbol M."/>
            <person name="Vorhoelter F.J."/>
            <person name="Weidner S."/>
            <person name="Wells D.H."/>
            <person name="Wong K."/>
            <person name="Yeh K.-C."/>
            <person name="Batut J."/>
        </authorList>
    </citation>
    <scope>NUCLEOTIDE SEQUENCE [LARGE SCALE GENOMIC DNA]</scope>
    <source>
        <strain>1021</strain>
    </source>
</reference>
<feature type="chain" id="PRO_0000198619" description="Ribulose bisphosphate carboxylase small subunit">
    <location>
        <begin position="1"/>
        <end position="129"/>
    </location>
</feature>
<feature type="region of interest" description="Disordered" evidence="2">
    <location>
        <begin position="109"/>
        <end position="129"/>
    </location>
</feature>
<comment type="function">
    <text evidence="1">RuBisCO catalyzes two reactions: the carboxylation of D-ribulose 1,5-bisphosphate, the primary event in carbon dioxide fixation, as well as the oxidative fragmentation of the pentose substrate. Both reactions occur simultaneously and in competition at the same active site. Although the small subunit is not catalytic it is essential for maximal activity.</text>
</comment>
<comment type="subunit">
    <text evidence="1">Heterohexadecamer of 8 large and 8 small subunits.</text>
</comment>
<comment type="miscellaneous">
    <text evidence="1">The basic functional RuBisCO is composed of a large chain homodimer in a 'head-to-tail' conformation. In form I RuBisCO this homodimer is arranged in a barrel-like tetramer with the small subunits forming a tetrameric 'cap' on each end of the 'barrel'.</text>
</comment>
<comment type="similarity">
    <text evidence="1">Belongs to the RuBisCO small chain family.</text>
</comment>
<sequence>MRITQGCFSFLPDLTDEQITAQVQYCLGKGWAIGVEYTDDPHPRNTYWEMWGNPMFDLKDAKGVMMELEDCRKAHPQDYIRLNAFDSSRGLETVTMSFIVNRPENEPSLRMTRTESNGRSQHYMWETQR</sequence>
<gene>
    <name evidence="1" type="primary">cbbS</name>
    <name type="ordered locus">RB0190</name>
    <name type="ORF">SMb20197</name>
</gene>
<protein>
    <recommendedName>
        <fullName evidence="1">Ribulose bisphosphate carboxylase small subunit</fullName>
        <shortName evidence="1">RuBisCO small subunit</shortName>
    </recommendedName>
</protein>
<geneLocation type="plasmid">
    <name>pSymB</name>
    <name>megaplasmid 2</name>
</geneLocation>
<dbReference type="EMBL" id="AL591985">
    <property type="protein sequence ID" value="CAC48590.1"/>
    <property type="molecule type" value="Genomic_DNA"/>
</dbReference>
<dbReference type="PIR" id="F95865">
    <property type="entry name" value="F95865"/>
</dbReference>
<dbReference type="RefSeq" id="NP_436730.1">
    <property type="nucleotide sequence ID" value="NC_003078.1"/>
</dbReference>
<dbReference type="RefSeq" id="WP_010975099.1">
    <property type="nucleotide sequence ID" value="NC_003078.1"/>
</dbReference>
<dbReference type="SMR" id="P58349"/>
<dbReference type="EnsemblBacteria" id="CAC48590">
    <property type="protein sequence ID" value="CAC48590"/>
    <property type="gene ID" value="SM_b20197"/>
</dbReference>
<dbReference type="KEGG" id="sme:SM_b20197"/>
<dbReference type="PATRIC" id="fig|266834.11.peg.5106"/>
<dbReference type="eggNOG" id="COG4451">
    <property type="taxonomic scope" value="Bacteria"/>
</dbReference>
<dbReference type="HOGENOM" id="CLU_098114_2_0_5"/>
<dbReference type="OrthoDB" id="9788955at2"/>
<dbReference type="Proteomes" id="UP000001976">
    <property type="component" value="Plasmid pSymB"/>
</dbReference>
<dbReference type="GO" id="GO:0016984">
    <property type="term" value="F:ribulose-bisphosphate carboxylase activity"/>
    <property type="evidence" value="ECO:0007669"/>
    <property type="project" value="UniProtKB-UniRule"/>
</dbReference>
<dbReference type="GO" id="GO:0019253">
    <property type="term" value="P:reductive pentose-phosphate cycle"/>
    <property type="evidence" value="ECO:0007669"/>
    <property type="project" value="UniProtKB-UniRule"/>
</dbReference>
<dbReference type="CDD" id="cd03527">
    <property type="entry name" value="RuBisCO_small"/>
    <property type="match status" value="1"/>
</dbReference>
<dbReference type="Gene3D" id="3.30.190.10">
    <property type="entry name" value="Ribulose bisphosphate carboxylase, small subunit"/>
    <property type="match status" value="1"/>
</dbReference>
<dbReference type="HAMAP" id="MF_00859">
    <property type="entry name" value="RuBisCO_S_bact"/>
    <property type="match status" value="1"/>
</dbReference>
<dbReference type="InterPro" id="IPR024681">
    <property type="entry name" value="RuBisCO_ssu"/>
</dbReference>
<dbReference type="InterPro" id="IPR000894">
    <property type="entry name" value="RuBisCO_ssu_dom"/>
</dbReference>
<dbReference type="InterPro" id="IPR036385">
    <property type="entry name" value="RuBisCO_ssu_sf"/>
</dbReference>
<dbReference type="PANTHER" id="PTHR31262">
    <property type="entry name" value="RIBULOSE BISPHOSPHATE CARBOXYLASE SMALL CHAIN 1, CHLOROPLASTIC"/>
    <property type="match status" value="1"/>
</dbReference>
<dbReference type="PANTHER" id="PTHR31262:SF23">
    <property type="entry name" value="RIBULOSE BISPHOSPHATE CARBOXYLASE SMALL SUBUNIT"/>
    <property type="match status" value="1"/>
</dbReference>
<dbReference type="Pfam" id="PF00101">
    <property type="entry name" value="RuBisCO_small"/>
    <property type="match status" value="1"/>
</dbReference>
<dbReference type="SMART" id="SM00961">
    <property type="entry name" value="RuBisCO_small"/>
    <property type="match status" value="1"/>
</dbReference>
<dbReference type="SUPFAM" id="SSF55239">
    <property type="entry name" value="RuBisCO, small subunit"/>
    <property type="match status" value="1"/>
</dbReference>
<accession>P58349</accession>
<proteinExistence type="inferred from homology"/>
<name>RBS_RHIME</name>